<name>RL11_BARBK</name>
<accession>A1USC4</accession>
<feature type="chain" id="PRO_1000046143" description="Large ribosomal subunit protein uL11">
    <location>
        <begin position="1"/>
        <end position="142"/>
    </location>
</feature>
<evidence type="ECO:0000255" key="1">
    <source>
        <dbReference type="HAMAP-Rule" id="MF_00736"/>
    </source>
</evidence>
<evidence type="ECO:0000305" key="2"/>
<organism>
    <name type="scientific">Bartonella bacilliformis (strain ATCC 35685 / KC583 / Herrer 020/F12,63)</name>
    <dbReference type="NCBI Taxonomy" id="360095"/>
    <lineage>
        <taxon>Bacteria</taxon>
        <taxon>Pseudomonadati</taxon>
        <taxon>Pseudomonadota</taxon>
        <taxon>Alphaproteobacteria</taxon>
        <taxon>Hyphomicrobiales</taxon>
        <taxon>Bartonellaceae</taxon>
        <taxon>Bartonella</taxon>
    </lineage>
</organism>
<protein>
    <recommendedName>
        <fullName evidence="1">Large ribosomal subunit protein uL11</fullName>
    </recommendedName>
    <alternativeName>
        <fullName evidence="2">50S ribosomal protein L11</fullName>
    </alternativeName>
</protein>
<proteinExistence type="inferred from homology"/>
<reference key="1">
    <citation type="submission" date="2006-12" db="EMBL/GenBank/DDBJ databases">
        <authorList>
            <person name="Hendrix L."/>
            <person name="Mohamoud Y."/>
            <person name="Radune D."/>
            <person name="Shvartsbeyn A."/>
            <person name="Daugherty S."/>
            <person name="Dodson R."/>
            <person name="Durkin A.S."/>
            <person name="Harkins D."/>
            <person name="Huot H."/>
            <person name="Kothari S.P."/>
            <person name="Madupu R."/>
            <person name="Li J."/>
            <person name="Nelson W.C."/>
            <person name="Shrivastava S."/>
            <person name="Giglio M.G."/>
            <person name="Haft D."/>
            <person name="Selengut J."/>
            <person name="Fraser-Ligget C."/>
            <person name="Seshadri R."/>
        </authorList>
    </citation>
    <scope>NUCLEOTIDE SEQUENCE [LARGE SCALE GENOMIC DNA]</scope>
    <source>
        <strain>ATCC 35685 / KC583 / Herrer 020/F12,63</strain>
    </source>
</reference>
<gene>
    <name evidence="1" type="primary">rplK</name>
    <name type="ordered locus">BARBAKC583_0567</name>
</gene>
<dbReference type="EMBL" id="CP000524">
    <property type="protein sequence ID" value="ABM45340.1"/>
    <property type="molecule type" value="Genomic_DNA"/>
</dbReference>
<dbReference type="RefSeq" id="WP_005766713.1">
    <property type="nucleotide sequence ID" value="NC_008783.1"/>
</dbReference>
<dbReference type="SMR" id="A1USC4"/>
<dbReference type="STRING" id="360095.BARBAKC583_0567"/>
<dbReference type="GeneID" id="4684848"/>
<dbReference type="KEGG" id="bbk:BARBAKC583_0567"/>
<dbReference type="PATRIC" id="fig|360095.6.peg.548"/>
<dbReference type="eggNOG" id="COG0080">
    <property type="taxonomic scope" value="Bacteria"/>
</dbReference>
<dbReference type="HOGENOM" id="CLU_074237_2_1_5"/>
<dbReference type="OrthoDB" id="9802408at2"/>
<dbReference type="Proteomes" id="UP000000643">
    <property type="component" value="Chromosome"/>
</dbReference>
<dbReference type="GO" id="GO:0022625">
    <property type="term" value="C:cytosolic large ribosomal subunit"/>
    <property type="evidence" value="ECO:0007669"/>
    <property type="project" value="TreeGrafter"/>
</dbReference>
<dbReference type="GO" id="GO:0070180">
    <property type="term" value="F:large ribosomal subunit rRNA binding"/>
    <property type="evidence" value="ECO:0007669"/>
    <property type="project" value="UniProtKB-UniRule"/>
</dbReference>
<dbReference type="GO" id="GO:0003735">
    <property type="term" value="F:structural constituent of ribosome"/>
    <property type="evidence" value="ECO:0007669"/>
    <property type="project" value="InterPro"/>
</dbReference>
<dbReference type="GO" id="GO:0006412">
    <property type="term" value="P:translation"/>
    <property type="evidence" value="ECO:0007669"/>
    <property type="project" value="UniProtKB-UniRule"/>
</dbReference>
<dbReference type="CDD" id="cd00349">
    <property type="entry name" value="Ribosomal_L11"/>
    <property type="match status" value="1"/>
</dbReference>
<dbReference type="FunFam" id="1.10.10.250:FF:000001">
    <property type="entry name" value="50S ribosomal protein L11"/>
    <property type="match status" value="1"/>
</dbReference>
<dbReference type="FunFam" id="3.30.1550.10:FF:000001">
    <property type="entry name" value="50S ribosomal protein L11"/>
    <property type="match status" value="1"/>
</dbReference>
<dbReference type="Gene3D" id="1.10.10.250">
    <property type="entry name" value="Ribosomal protein L11, C-terminal domain"/>
    <property type="match status" value="1"/>
</dbReference>
<dbReference type="Gene3D" id="3.30.1550.10">
    <property type="entry name" value="Ribosomal protein L11/L12, N-terminal domain"/>
    <property type="match status" value="1"/>
</dbReference>
<dbReference type="HAMAP" id="MF_00736">
    <property type="entry name" value="Ribosomal_uL11"/>
    <property type="match status" value="1"/>
</dbReference>
<dbReference type="InterPro" id="IPR000911">
    <property type="entry name" value="Ribosomal_uL11"/>
</dbReference>
<dbReference type="InterPro" id="IPR006519">
    <property type="entry name" value="Ribosomal_uL11_bac-typ"/>
</dbReference>
<dbReference type="InterPro" id="IPR020783">
    <property type="entry name" value="Ribosomal_uL11_C"/>
</dbReference>
<dbReference type="InterPro" id="IPR036769">
    <property type="entry name" value="Ribosomal_uL11_C_sf"/>
</dbReference>
<dbReference type="InterPro" id="IPR020785">
    <property type="entry name" value="Ribosomal_uL11_CS"/>
</dbReference>
<dbReference type="InterPro" id="IPR020784">
    <property type="entry name" value="Ribosomal_uL11_N"/>
</dbReference>
<dbReference type="InterPro" id="IPR036796">
    <property type="entry name" value="Ribosomal_uL11_N_sf"/>
</dbReference>
<dbReference type="NCBIfam" id="TIGR01632">
    <property type="entry name" value="L11_bact"/>
    <property type="match status" value="1"/>
</dbReference>
<dbReference type="PANTHER" id="PTHR11661">
    <property type="entry name" value="60S RIBOSOMAL PROTEIN L12"/>
    <property type="match status" value="1"/>
</dbReference>
<dbReference type="PANTHER" id="PTHR11661:SF1">
    <property type="entry name" value="LARGE RIBOSOMAL SUBUNIT PROTEIN UL11M"/>
    <property type="match status" value="1"/>
</dbReference>
<dbReference type="Pfam" id="PF00298">
    <property type="entry name" value="Ribosomal_L11"/>
    <property type="match status" value="1"/>
</dbReference>
<dbReference type="Pfam" id="PF03946">
    <property type="entry name" value="Ribosomal_L11_N"/>
    <property type="match status" value="1"/>
</dbReference>
<dbReference type="SMART" id="SM00649">
    <property type="entry name" value="RL11"/>
    <property type="match status" value="1"/>
</dbReference>
<dbReference type="SUPFAM" id="SSF54747">
    <property type="entry name" value="Ribosomal L11/L12e N-terminal domain"/>
    <property type="match status" value="1"/>
</dbReference>
<dbReference type="SUPFAM" id="SSF46906">
    <property type="entry name" value="Ribosomal protein L11, C-terminal domain"/>
    <property type="match status" value="1"/>
</dbReference>
<dbReference type="PROSITE" id="PS00359">
    <property type="entry name" value="RIBOSOMAL_L11"/>
    <property type="match status" value="1"/>
</dbReference>
<sequence>MAKKNAGQLKLQVPAGAATPSPPIGPALGQRGINIMEFCKAFNAATQEMEKGAPIPVVITYYQDKSFTFSLKTPPVSFFLKKEANLKSGSKEPGKVFVGTISRDKICSIAEAKMKDLNANNIEAAMRMIEGSARSMGLEVVG</sequence>
<comment type="function">
    <text evidence="1">Forms part of the ribosomal stalk which helps the ribosome interact with GTP-bound translation factors.</text>
</comment>
<comment type="subunit">
    <text evidence="1">Part of the ribosomal stalk of the 50S ribosomal subunit. Interacts with L10 and the large rRNA to form the base of the stalk. L10 forms an elongated spine to which L12 dimers bind in a sequential fashion forming a multimeric L10(L12)X complex.</text>
</comment>
<comment type="PTM">
    <text evidence="1">One or more lysine residues are methylated.</text>
</comment>
<comment type="similarity">
    <text evidence="1">Belongs to the universal ribosomal protein uL11 family.</text>
</comment>
<keyword id="KW-0488">Methylation</keyword>
<keyword id="KW-0687">Ribonucleoprotein</keyword>
<keyword id="KW-0689">Ribosomal protein</keyword>
<keyword id="KW-0694">RNA-binding</keyword>
<keyword id="KW-0699">rRNA-binding</keyword>